<feature type="chain" id="PRO_0000052134" description="Flavonoid 3',5'-hydroxylase">
    <location>
        <begin position="1"/>
        <end position="510"/>
    </location>
</feature>
<feature type="binding site" description="axial binding residue" evidence="1">
    <location>
        <position position="447"/>
    </location>
    <ligand>
        <name>heme</name>
        <dbReference type="ChEBI" id="CHEBI:30413"/>
    </ligand>
    <ligandPart>
        <name>Fe</name>
        <dbReference type="ChEBI" id="CHEBI:18248"/>
    </ligandPart>
</feature>
<organism>
    <name type="scientific">Eustoma exaltatum subsp. russellianum</name>
    <name type="common">Bluebells</name>
    <name type="synonym">Eustoma grandiflorum</name>
    <dbReference type="NCBI Taxonomy" id="52518"/>
    <lineage>
        <taxon>Eukaryota</taxon>
        <taxon>Viridiplantae</taxon>
        <taxon>Streptophyta</taxon>
        <taxon>Embryophyta</taxon>
        <taxon>Tracheophyta</taxon>
        <taxon>Spermatophyta</taxon>
        <taxon>Magnoliopsida</taxon>
        <taxon>eudicotyledons</taxon>
        <taxon>Gunneridae</taxon>
        <taxon>Pentapetalae</taxon>
        <taxon>asterids</taxon>
        <taxon>lamiids</taxon>
        <taxon>Gentianales</taxon>
        <taxon>Gentianaceae</taxon>
        <taxon>Chironieae</taxon>
        <taxon>Chironiinae</taxon>
        <taxon>Eustoma</taxon>
    </lineage>
</organism>
<gene>
    <name type="primary">CYP75A7</name>
</gene>
<proteinExistence type="evidence at protein level"/>
<sequence>MAVGNGVLLHIAASLMLFFHVQKLVQYLWMNSRRHRLPPGPIGWPVLGALRLLGTMPHVALANMAKKYGPVMYLKVGSCGLAVASTPEAAKAFLKTLDMNFSNRPPNAGATHLAYNAQDMVFADYGPRWKLLRKLSNIHILGGKALQGWEEVRKKELGYMLYAMAESGRHGQPVVVSEMLTYAMANMLGQVMLSKRVFGSQGSESNEFKDMVVELMTVAGYFNIGDFIPSIAWMDLQGIQGGMKRLHKKFDALLTRLLEEHTASAHERKGSPDFLDFVVANGDNSEGERLQTVNIKALLLNMFTAGTDTSSSVIEWALAELLKNPIILRRAQEEMDGVIGRDRRFLEADISKLPYLQAICKEAFRKHPSTPLNLPRIASQACEVNGHYIPKGTRLSVNIWAIGRDPSVWENPNEFNPDRFLERKNAKIDPRGNDFELIPFGAGRRICAGTRLGILLVEYILGTLVHSFVWELPSSVIELNMDESFGLALQKAVPLAAMVTPRLPLHIYSP</sequence>
<comment type="function">
    <text evidence="2">Catalyzes the 3'5'-hydroxylation of naringenin and eriodictyol to form 5,7,3,'4',5'-pentahydroxyflavanone and 3',5'-hydroxylation of dihydrokaempferol and dihydroquercetin to form dihydromyricetin.</text>
</comment>
<comment type="catalytic activity">
    <reaction evidence="2">
        <text>a 3',5'-unsubstituted flavanone + 2 reduced [NADPH--hemoprotein reductase] + 2 O2 = a 3',5'-dihydroxyflavanone + 2 oxidized [NADPH--hemoprotein reductase] + 2 H2O + 2 H(+)</text>
        <dbReference type="Rhea" id="RHEA:55448"/>
        <dbReference type="Rhea" id="RHEA-COMP:11964"/>
        <dbReference type="Rhea" id="RHEA-COMP:11965"/>
        <dbReference type="ChEBI" id="CHEBI:15377"/>
        <dbReference type="ChEBI" id="CHEBI:15378"/>
        <dbReference type="ChEBI" id="CHEBI:15379"/>
        <dbReference type="ChEBI" id="CHEBI:48025"/>
        <dbReference type="ChEBI" id="CHEBI:57618"/>
        <dbReference type="ChEBI" id="CHEBI:58210"/>
        <dbReference type="ChEBI" id="CHEBI:138897"/>
        <dbReference type="EC" id="1.14.14.81"/>
    </reaction>
</comment>
<comment type="cofactor">
    <cofactor evidence="1">
        <name>heme</name>
        <dbReference type="ChEBI" id="CHEBI:30413"/>
    </cofactor>
</comment>
<comment type="pathway">
    <text>Pigment biosynthesis; anthocyanin biosynthesis.</text>
</comment>
<comment type="similarity">
    <text evidence="3">Belongs to the cytochrome P450 family.</text>
</comment>
<reference key="1">
    <citation type="journal article" date="1999" name="FEBS Lett.">
        <title>Expression of chimeric P450 genes encoding flavonoid-3', 5'-hydroxylase in transgenic tobacco and petunia plants.</title>
        <authorList>
            <person name="Shimada Y."/>
            <person name="Nakano-Shimada R."/>
            <person name="Ohbayashi M."/>
            <person name="Okinaka Y."/>
            <person name="Kiyokawa S."/>
            <person name="Kikuchi Y."/>
        </authorList>
    </citation>
    <scope>NUCLEOTIDE SEQUENCE [MRNA]</scope>
    <scope>FUNCTION</scope>
    <scope>CATALYTIC ACTIVITY</scope>
</reference>
<reference key="2">
    <citation type="journal article" date="2004" name="Physiol. Plantarum">
        <title>Regulation of gene expression involved in flavonol and anthocyanin biosynthesis during petal development in lisianthus (Eustoma grandiflorum).</title>
        <authorList>
            <person name="Noda N."/>
            <person name="Kanno Y."/>
            <person name="Kato N."/>
            <person name="Kazuma K."/>
            <person name="Suzuki M."/>
        </authorList>
    </citation>
    <scope>NUCLEOTIDE SEQUENCE [MRNA]</scope>
    <source>
        <tissue>Petal</tissue>
    </source>
</reference>
<name>C75A7_EUSER</name>
<keyword id="KW-0349">Heme</keyword>
<keyword id="KW-0408">Iron</keyword>
<keyword id="KW-0479">Metal-binding</keyword>
<keyword id="KW-0503">Monooxygenase</keyword>
<keyword id="KW-0521">NADP</keyword>
<keyword id="KW-0560">Oxidoreductase</keyword>
<protein>
    <recommendedName>
        <fullName>Flavonoid 3',5'-hydroxylase</fullName>
        <shortName>F3'5'H</shortName>
        <ecNumber evidence="2">1.14.14.81</ecNumber>
    </recommendedName>
    <alternativeName>
        <fullName>Cytochrome P450 75A7</fullName>
    </alternativeName>
</protein>
<accession>O04790</accession>
<evidence type="ECO:0000250" key="1"/>
<evidence type="ECO:0000269" key="2">
    <source>
    </source>
</evidence>
<evidence type="ECO:0000305" key="3"/>
<dbReference type="EC" id="1.14.14.81" evidence="2"/>
<dbReference type="EMBL" id="D14589">
    <property type="protein sequence ID" value="BAA03439.1"/>
    <property type="molecule type" value="mRNA"/>
</dbReference>
<dbReference type="EMBL" id="AB078957">
    <property type="protein sequence ID" value="BAD34460.1"/>
    <property type="molecule type" value="mRNA"/>
</dbReference>
<dbReference type="SMR" id="O04790"/>
<dbReference type="KEGG" id="ag:BAA03439"/>
<dbReference type="UniPathway" id="UPA00009"/>
<dbReference type="GO" id="GO:0033772">
    <property type="term" value="F:flavonoid 3',5'-hydroxylase activity"/>
    <property type="evidence" value="ECO:0007669"/>
    <property type="project" value="UniProtKB-EC"/>
</dbReference>
<dbReference type="GO" id="GO:0020037">
    <property type="term" value="F:heme binding"/>
    <property type="evidence" value="ECO:0007669"/>
    <property type="project" value="InterPro"/>
</dbReference>
<dbReference type="GO" id="GO:0005506">
    <property type="term" value="F:iron ion binding"/>
    <property type="evidence" value="ECO:0007669"/>
    <property type="project" value="InterPro"/>
</dbReference>
<dbReference type="GO" id="GO:0009718">
    <property type="term" value="P:anthocyanin-containing compound biosynthetic process"/>
    <property type="evidence" value="ECO:0007669"/>
    <property type="project" value="UniProtKB-UniPathway"/>
</dbReference>
<dbReference type="CDD" id="cd20657">
    <property type="entry name" value="CYP75"/>
    <property type="match status" value="1"/>
</dbReference>
<dbReference type="FunFam" id="1.10.630.10:FF:000111">
    <property type="entry name" value="Flavonoid 3',5'-hydroxylase 2"/>
    <property type="match status" value="1"/>
</dbReference>
<dbReference type="Gene3D" id="1.10.630.10">
    <property type="entry name" value="Cytochrome P450"/>
    <property type="match status" value="1"/>
</dbReference>
<dbReference type="InterPro" id="IPR001128">
    <property type="entry name" value="Cyt_P450"/>
</dbReference>
<dbReference type="InterPro" id="IPR017972">
    <property type="entry name" value="Cyt_P450_CS"/>
</dbReference>
<dbReference type="InterPro" id="IPR002401">
    <property type="entry name" value="Cyt_P450_E_grp-I"/>
</dbReference>
<dbReference type="InterPro" id="IPR036396">
    <property type="entry name" value="Cyt_P450_sf"/>
</dbReference>
<dbReference type="PANTHER" id="PTHR47944">
    <property type="entry name" value="CYTOCHROME P450 98A9"/>
    <property type="match status" value="1"/>
</dbReference>
<dbReference type="PANTHER" id="PTHR47944:SF18">
    <property type="entry name" value="FLAVONOID 3'-MONOOXYGENASE"/>
    <property type="match status" value="1"/>
</dbReference>
<dbReference type="Pfam" id="PF00067">
    <property type="entry name" value="p450"/>
    <property type="match status" value="1"/>
</dbReference>
<dbReference type="PRINTS" id="PR00463">
    <property type="entry name" value="EP450I"/>
</dbReference>
<dbReference type="PRINTS" id="PR00385">
    <property type="entry name" value="P450"/>
</dbReference>
<dbReference type="SUPFAM" id="SSF48264">
    <property type="entry name" value="Cytochrome P450"/>
    <property type="match status" value="1"/>
</dbReference>
<dbReference type="PROSITE" id="PS00086">
    <property type="entry name" value="CYTOCHROME_P450"/>
    <property type="match status" value="1"/>
</dbReference>